<sequence>MQVKAPRGTYDILPQDSVKWQYIEKIMRDSAESFGFRAIRTPLFEHTELFQRGVGQGTDIVSKEMYSFNDRSQRSLTLRPEGTAPCARALIEHGIYSGVMPVKWYYLGPMFRYDRPQTGRYRQFHQFGVEAFGSNSPYLDAEIIILLVEILRRLGLDDYELHLNSLGCSVCRDDYRQKLLQHISPFKEQLCQDCQQRYMQNPLRVLDCKMETCHQAIRGYPIFYDHLCPYCQEHYSRVQAALQANGISYIHDNNLVRGLDYYSNTAFEIHLPGIGAQSAVGGGGRYDGLVKELGGPDIPGIGFALGMERLLLALDMLGKSKFSNPSLDVFVVVMNDAYEMQGLQLVNELRRRGIRADKDYGGRSGKAQMKYAGKTAARFVVMVGEEEVEKHFWTLRDMQSKEQWQLGQEELISSIRSVIETK</sequence>
<gene>
    <name evidence="1" type="primary">hisS</name>
    <name type="ordered locus">Swol_0811</name>
</gene>
<comment type="catalytic activity">
    <reaction evidence="1">
        <text>tRNA(His) + L-histidine + ATP = L-histidyl-tRNA(His) + AMP + diphosphate + H(+)</text>
        <dbReference type="Rhea" id="RHEA:17313"/>
        <dbReference type="Rhea" id="RHEA-COMP:9665"/>
        <dbReference type="Rhea" id="RHEA-COMP:9689"/>
        <dbReference type="ChEBI" id="CHEBI:15378"/>
        <dbReference type="ChEBI" id="CHEBI:30616"/>
        <dbReference type="ChEBI" id="CHEBI:33019"/>
        <dbReference type="ChEBI" id="CHEBI:57595"/>
        <dbReference type="ChEBI" id="CHEBI:78442"/>
        <dbReference type="ChEBI" id="CHEBI:78527"/>
        <dbReference type="ChEBI" id="CHEBI:456215"/>
        <dbReference type="EC" id="6.1.1.21"/>
    </reaction>
</comment>
<comment type="subunit">
    <text evidence="1">Homodimer.</text>
</comment>
<comment type="subcellular location">
    <subcellularLocation>
        <location evidence="1">Cytoplasm</location>
    </subcellularLocation>
</comment>
<comment type="similarity">
    <text evidence="1">Belongs to the class-II aminoacyl-tRNA synthetase family.</text>
</comment>
<organism>
    <name type="scientific">Syntrophomonas wolfei subsp. wolfei (strain DSM 2245B / Goettingen)</name>
    <dbReference type="NCBI Taxonomy" id="335541"/>
    <lineage>
        <taxon>Bacteria</taxon>
        <taxon>Bacillati</taxon>
        <taxon>Bacillota</taxon>
        <taxon>Clostridia</taxon>
        <taxon>Eubacteriales</taxon>
        <taxon>Syntrophomonadaceae</taxon>
        <taxon>Syntrophomonas</taxon>
    </lineage>
</organism>
<keyword id="KW-0030">Aminoacyl-tRNA synthetase</keyword>
<keyword id="KW-0067">ATP-binding</keyword>
<keyword id="KW-0963">Cytoplasm</keyword>
<keyword id="KW-0436">Ligase</keyword>
<keyword id="KW-0547">Nucleotide-binding</keyword>
<keyword id="KW-0648">Protein biosynthesis</keyword>
<keyword id="KW-1185">Reference proteome</keyword>
<accession>Q0AYS2</accession>
<proteinExistence type="inferred from homology"/>
<name>SYH_SYNWW</name>
<protein>
    <recommendedName>
        <fullName evidence="1">Histidine--tRNA ligase</fullName>
        <ecNumber evidence="1">6.1.1.21</ecNumber>
    </recommendedName>
    <alternativeName>
        <fullName evidence="1">Histidyl-tRNA synthetase</fullName>
        <shortName evidence="1">HisRS</shortName>
    </alternativeName>
</protein>
<feature type="chain" id="PRO_1000016476" description="Histidine--tRNA ligase">
    <location>
        <begin position="1"/>
        <end position="422"/>
    </location>
</feature>
<dbReference type="EC" id="6.1.1.21" evidence="1"/>
<dbReference type="EMBL" id="CP000448">
    <property type="protein sequence ID" value="ABI68132.1"/>
    <property type="molecule type" value="Genomic_DNA"/>
</dbReference>
<dbReference type="RefSeq" id="WP_011640237.1">
    <property type="nucleotide sequence ID" value="NC_008346.1"/>
</dbReference>
<dbReference type="SMR" id="Q0AYS2"/>
<dbReference type="STRING" id="335541.Swol_0811"/>
<dbReference type="KEGG" id="swo:Swol_0811"/>
<dbReference type="eggNOG" id="COG0124">
    <property type="taxonomic scope" value="Bacteria"/>
</dbReference>
<dbReference type="HOGENOM" id="CLU_025113_1_1_9"/>
<dbReference type="OrthoDB" id="9800814at2"/>
<dbReference type="Proteomes" id="UP000001968">
    <property type="component" value="Chromosome"/>
</dbReference>
<dbReference type="GO" id="GO:0005737">
    <property type="term" value="C:cytoplasm"/>
    <property type="evidence" value="ECO:0007669"/>
    <property type="project" value="UniProtKB-SubCell"/>
</dbReference>
<dbReference type="GO" id="GO:0005524">
    <property type="term" value="F:ATP binding"/>
    <property type="evidence" value="ECO:0007669"/>
    <property type="project" value="UniProtKB-UniRule"/>
</dbReference>
<dbReference type="GO" id="GO:0140096">
    <property type="term" value="F:catalytic activity, acting on a protein"/>
    <property type="evidence" value="ECO:0007669"/>
    <property type="project" value="UniProtKB-ARBA"/>
</dbReference>
<dbReference type="GO" id="GO:0004821">
    <property type="term" value="F:histidine-tRNA ligase activity"/>
    <property type="evidence" value="ECO:0007669"/>
    <property type="project" value="UniProtKB-UniRule"/>
</dbReference>
<dbReference type="GO" id="GO:0016740">
    <property type="term" value="F:transferase activity"/>
    <property type="evidence" value="ECO:0007669"/>
    <property type="project" value="UniProtKB-ARBA"/>
</dbReference>
<dbReference type="GO" id="GO:0006427">
    <property type="term" value="P:histidyl-tRNA aminoacylation"/>
    <property type="evidence" value="ECO:0007669"/>
    <property type="project" value="UniProtKB-UniRule"/>
</dbReference>
<dbReference type="CDD" id="cd00773">
    <property type="entry name" value="HisRS-like_core"/>
    <property type="match status" value="1"/>
</dbReference>
<dbReference type="Gene3D" id="3.40.50.800">
    <property type="entry name" value="Anticodon-binding domain"/>
    <property type="match status" value="1"/>
</dbReference>
<dbReference type="Gene3D" id="3.30.930.10">
    <property type="entry name" value="Bira Bifunctional Protein, Domain 2"/>
    <property type="match status" value="1"/>
</dbReference>
<dbReference type="HAMAP" id="MF_00127">
    <property type="entry name" value="His_tRNA_synth"/>
    <property type="match status" value="1"/>
</dbReference>
<dbReference type="InterPro" id="IPR006195">
    <property type="entry name" value="aa-tRNA-synth_II"/>
</dbReference>
<dbReference type="InterPro" id="IPR045864">
    <property type="entry name" value="aa-tRNA-synth_II/BPL/LPL"/>
</dbReference>
<dbReference type="InterPro" id="IPR004154">
    <property type="entry name" value="Anticodon-bd"/>
</dbReference>
<dbReference type="InterPro" id="IPR036621">
    <property type="entry name" value="Anticodon-bd_dom_sf"/>
</dbReference>
<dbReference type="InterPro" id="IPR015807">
    <property type="entry name" value="His-tRNA-ligase"/>
</dbReference>
<dbReference type="InterPro" id="IPR041715">
    <property type="entry name" value="HisRS-like_core"/>
</dbReference>
<dbReference type="InterPro" id="IPR004516">
    <property type="entry name" value="HisRS/HisZ"/>
</dbReference>
<dbReference type="NCBIfam" id="TIGR00442">
    <property type="entry name" value="hisS"/>
    <property type="match status" value="1"/>
</dbReference>
<dbReference type="PANTHER" id="PTHR43707:SF1">
    <property type="entry name" value="HISTIDINE--TRNA LIGASE, MITOCHONDRIAL-RELATED"/>
    <property type="match status" value="1"/>
</dbReference>
<dbReference type="PANTHER" id="PTHR43707">
    <property type="entry name" value="HISTIDYL-TRNA SYNTHETASE"/>
    <property type="match status" value="1"/>
</dbReference>
<dbReference type="Pfam" id="PF03129">
    <property type="entry name" value="HGTP_anticodon"/>
    <property type="match status" value="1"/>
</dbReference>
<dbReference type="Pfam" id="PF13393">
    <property type="entry name" value="tRNA-synt_His"/>
    <property type="match status" value="1"/>
</dbReference>
<dbReference type="PIRSF" id="PIRSF001549">
    <property type="entry name" value="His-tRNA_synth"/>
    <property type="match status" value="1"/>
</dbReference>
<dbReference type="SUPFAM" id="SSF52954">
    <property type="entry name" value="Class II aaRS ABD-related"/>
    <property type="match status" value="1"/>
</dbReference>
<dbReference type="SUPFAM" id="SSF55681">
    <property type="entry name" value="Class II aaRS and biotin synthetases"/>
    <property type="match status" value="1"/>
</dbReference>
<dbReference type="PROSITE" id="PS50862">
    <property type="entry name" value="AA_TRNA_LIGASE_II"/>
    <property type="match status" value="1"/>
</dbReference>
<evidence type="ECO:0000255" key="1">
    <source>
        <dbReference type="HAMAP-Rule" id="MF_00127"/>
    </source>
</evidence>
<reference key="1">
    <citation type="journal article" date="2010" name="Environ. Microbiol.">
        <title>The genome of Syntrophomonas wolfei: new insights into syntrophic metabolism and biohydrogen production.</title>
        <authorList>
            <person name="Sieber J.R."/>
            <person name="Sims D.R."/>
            <person name="Han C."/>
            <person name="Kim E."/>
            <person name="Lykidis A."/>
            <person name="Lapidus A.L."/>
            <person name="McDonnald E."/>
            <person name="Rohlin L."/>
            <person name="Culley D.E."/>
            <person name="Gunsalus R."/>
            <person name="McInerney M.J."/>
        </authorList>
    </citation>
    <scope>NUCLEOTIDE SEQUENCE [LARGE SCALE GENOMIC DNA]</scope>
    <source>
        <strain>DSM 2245B / Goettingen</strain>
    </source>
</reference>